<proteinExistence type="inferred from homology"/>
<feature type="chain" id="PRO_0000255004" description="Cytochrome b">
    <location>
        <begin position="1"/>
        <end position="380"/>
    </location>
</feature>
<feature type="transmembrane region" description="Helical" evidence="2">
    <location>
        <begin position="33"/>
        <end position="53"/>
    </location>
</feature>
<feature type="transmembrane region" description="Helical" evidence="2">
    <location>
        <begin position="77"/>
        <end position="98"/>
    </location>
</feature>
<feature type="transmembrane region" description="Helical" evidence="2">
    <location>
        <begin position="113"/>
        <end position="133"/>
    </location>
</feature>
<feature type="transmembrane region" description="Helical" evidence="2">
    <location>
        <begin position="178"/>
        <end position="198"/>
    </location>
</feature>
<feature type="transmembrane region" description="Helical" evidence="2">
    <location>
        <begin position="226"/>
        <end position="246"/>
    </location>
</feature>
<feature type="transmembrane region" description="Helical" evidence="2">
    <location>
        <begin position="288"/>
        <end position="308"/>
    </location>
</feature>
<feature type="transmembrane region" description="Helical" evidence="2">
    <location>
        <begin position="320"/>
        <end position="340"/>
    </location>
</feature>
<feature type="transmembrane region" description="Helical" evidence="2">
    <location>
        <begin position="347"/>
        <end position="367"/>
    </location>
</feature>
<feature type="binding site" description="axial binding residue" evidence="2">
    <location>
        <position position="83"/>
    </location>
    <ligand>
        <name>heme b</name>
        <dbReference type="ChEBI" id="CHEBI:60344"/>
        <label>b562</label>
    </ligand>
    <ligandPart>
        <name>Fe</name>
        <dbReference type="ChEBI" id="CHEBI:18248"/>
    </ligandPart>
</feature>
<feature type="binding site" description="axial binding residue" evidence="2">
    <location>
        <position position="97"/>
    </location>
    <ligand>
        <name>heme b</name>
        <dbReference type="ChEBI" id="CHEBI:60344"/>
        <label>b566</label>
    </ligand>
    <ligandPart>
        <name>Fe</name>
        <dbReference type="ChEBI" id="CHEBI:18248"/>
    </ligandPart>
</feature>
<feature type="binding site" description="axial binding residue" evidence="2">
    <location>
        <position position="182"/>
    </location>
    <ligand>
        <name>heme b</name>
        <dbReference type="ChEBI" id="CHEBI:60344"/>
        <label>b562</label>
    </ligand>
    <ligandPart>
        <name>Fe</name>
        <dbReference type="ChEBI" id="CHEBI:18248"/>
    </ligandPart>
</feature>
<feature type="binding site" description="axial binding residue" evidence="2">
    <location>
        <position position="196"/>
    </location>
    <ligand>
        <name>heme b</name>
        <dbReference type="ChEBI" id="CHEBI:60344"/>
        <label>b566</label>
    </ligand>
    <ligandPart>
        <name>Fe</name>
        <dbReference type="ChEBI" id="CHEBI:18248"/>
    </ligandPart>
</feature>
<feature type="binding site" evidence="2">
    <location>
        <position position="201"/>
    </location>
    <ligand>
        <name>a ubiquinone</name>
        <dbReference type="ChEBI" id="CHEBI:16389"/>
    </ligand>
</feature>
<sequence>MTIMRKKHPLLKLINNSFIDLPTPSNISSWWNFGSLLGICLAIQILTGLFLAMHYTSDTTTAFSSVAHICRDVNYGWLIRYMHANGASMFFICLFIHVGRGIYYGSFMLLETWNIGIILLLTTMATAFVGYVLPWGXXSFWGATVITNLLSAIPYIGNTLVEWIWGGFSVXKATLTRFFAFHFILPFIITALVLVHLLFLHETGSNNPAGLNSNSDKIPFHPYYTTKDLLGALLLLMVLMILVLFFPHILGXPDNYTPAKPLXTPAHIXPEXYFLFAYAILRSVPNKLGGVLALILSILILATLPILNSSKQHGLIYRPITQTLYWIFITNILVLTWIGGQPAEYPFTTIGQVSSILYFTIIIILMPITNTVENNILKLH</sequence>
<keyword id="KW-0249">Electron transport</keyword>
<keyword id="KW-0349">Heme</keyword>
<keyword id="KW-0408">Iron</keyword>
<keyword id="KW-0472">Membrane</keyword>
<keyword id="KW-0479">Metal-binding</keyword>
<keyword id="KW-0496">Mitochondrion</keyword>
<keyword id="KW-0999">Mitochondrion inner membrane</keyword>
<keyword id="KW-0679">Respiratory chain</keyword>
<keyword id="KW-0812">Transmembrane</keyword>
<keyword id="KW-1133">Transmembrane helix</keyword>
<keyword id="KW-0813">Transport</keyword>
<keyword id="KW-0830">Ubiquinone</keyword>
<name>CYB_CHIIN</name>
<accession>Q9XNW5</accession>
<gene>
    <name type="primary">MT-CYB</name>
    <name type="synonym">COB</name>
    <name type="synonym">CYTB</name>
    <name type="synonym">MTCYB</name>
</gene>
<protein>
    <recommendedName>
        <fullName>Cytochrome b</fullName>
    </recommendedName>
    <alternativeName>
        <fullName>Complex III subunit 3</fullName>
    </alternativeName>
    <alternativeName>
        <fullName>Complex III subunit III</fullName>
    </alternativeName>
    <alternativeName>
        <fullName>Cytochrome b-c1 complex subunit 3</fullName>
    </alternativeName>
    <alternativeName>
        <fullName>Ubiquinol-cytochrome-c reductase complex cytochrome b subunit</fullName>
    </alternativeName>
</protein>
<dbReference type="EMBL" id="AF108679">
    <property type="protein sequence ID" value="AAD45461.1"/>
    <property type="molecule type" value="Genomic_DNA"/>
</dbReference>
<dbReference type="GO" id="GO:0005743">
    <property type="term" value="C:mitochondrial inner membrane"/>
    <property type="evidence" value="ECO:0007669"/>
    <property type="project" value="UniProtKB-SubCell"/>
</dbReference>
<dbReference type="GO" id="GO:0045275">
    <property type="term" value="C:respiratory chain complex III"/>
    <property type="evidence" value="ECO:0007669"/>
    <property type="project" value="InterPro"/>
</dbReference>
<dbReference type="GO" id="GO:0046872">
    <property type="term" value="F:metal ion binding"/>
    <property type="evidence" value="ECO:0007669"/>
    <property type="project" value="UniProtKB-KW"/>
</dbReference>
<dbReference type="GO" id="GO:0008121">
    <property type="term" value="F:ubiquinol-cytochrome-c reductase activity"/>
    <property type="evidence" value="ECO:0007669"/>
    <property type="project" value="InterPro"/>
</dbReference>
<dbReference type="GO" id="GO:0006122">
    <property type="term" value="P:mitochondrial electron transport, ubiquinol to cytochrome c"/>
    <property type="evidence" value="ECO:0007669"/>
    <property type="project" value="TreeGrafter"/>
</dbReference>
<dbReference type="CDD" id="cd00290">
    <property type="entry name" value="cytochrome_b_C"/>
    <property type="match status" value="1"/>
</dbReference>
<dbReference type="CDD" id="cd00284">
    <property type="entry name" value="Cytochrome_b_N"/>
    <property type="match status" value="1"/>
</dbReference>
<dbReference type="FunFam" id="1.20.810.10:FF:000002">
    <property type="entry name" value="Cytochrome b"/>
    <property type="match status" value="1"/>
</dbReference>
<dbReference type="Gene3D" id="1.20.810.10">
    <property type="entry name" value="Cytochrome Bc1 Complex, Chain C"/>
    <property type="match status" value="1"/>
</dbReference>
<dbReference type="InterPro" id="IPR005798">
    <property type="entry name" value="Cyt_b/b6_C"/>
</dbReference>
<dbReference type="InterPro" id="IPR036150">
    <property type="entry name" value="Cyt_b/b6_C_sf"/>
</dbReference>
<dbReference type="InterPro" id="IPR005797">
    <property type="entry name" value="Cyt_b/b6_N"/>
</dbReference>
<dbReference type="InterPro" id="IPR027387">
    <property type="entry name" value="Cytb/b6-like_sf"/>
</dbReference>
<dbReference type="InterPro" id="IPR030689">
    <property type="entry name" value="Cytochrome_b"/>
</dbReference>
<dbReference type="InterPro" id="IPR048260">
    <property type="entry name" value="Cytochrome_b_C_euk/bac"/>
</dbReference>
<dbReference type="InterPro" id="IPR048259">
    <property type="entry name" value="Cytochrome_b_N_euk/bac"/>
</dbReference>
<dbReference type="InterPro" id="IPR016174">
    <property type="entry name" value="Di-haem_cyt_TM"/>
</dbReference>
<dbReference type="PANTHER" id="PTHR19271">
    <property type="entry name" value="CYTOCHROME B"/>
    <property type="match status" value="1"/>
</dbReference>
<dbReference type="PANTHER" id="PTHR19271:SF16">
    <property type="entry name" value="CYTOCHROME B"/>
    <property type="match status" value="1"/>
</dbReference>
<dbReference type="Pfam" id="PF00032">
    <property type="entry name" value="Cytochrom_B_C"/>
    <property type="match status" value="1"/>
</dbReference>
<dbReference type="Pfam" id="PF00033">
    <property type="entry name" value="Cytochrome_B"/>
    <property type="match status" value="1"/>
</dbReference>
<dbReference type="PIRSF" id="PIRSF038885">
    <property type="entry name" value="COB"/>
    <property type="match status" value="1"/>
</dbReference>
<dbReference type="SUPFAM" id="SSF81648">
    <property type="entry name" value="a domain/subunit of cytochrome bc1 complex (Ubiquinol-cytochrome c reductase)"/>
    <property type="match status" value="1"/>
</dbReference>
<dbReference type="SUPFAM" id="SSF81342">
    <property type="entry name" value="Transmembrane di-heme cytochromes"/>
    <property type="match status" value="1"/>
</dbReference>
<dbReference type="PROSITE" id="PS51003">
    <property type="entry name" value="CYTB_CTER"/>
    <property type="match status" value="1"/>
</dbReference>
<dbReference type="PROSITE" id="PS51002">
    <property type="entry name" value="CYTB_NTER"/>
    <property type="match status" value="1"/>
</dbReference>
<organism>
    <name type="scientific">Chilomys instans</name>
    <name type="common">Colombian forest mouse</name>
    <dbReference type="NCBI Taxonomy" id="89117"/>
    <lineage>
        <taxon>Eukaryota</taxon>
        <taxon>Metazoa</taxon>
        <taxon>Chordata</taxon>
        <taxon>Craniata</taxon>
        <taxon>Vertebrata</taxon>
        <taxon>Euteleostomi</taxon>
        <taxon>Mammalia</taxon>
        <taxon>Eutheria</taxon>
        <taxon>Euarchontoglires</taxon>
        <taxon>Glires</taxon>
        <taxon>Rodentia</taxon>
        <taxon>Myomorpha</taxon>
        <taxon>Muroidea</taxon>
        <taxon>Cricetidae</taxon>
        <taxon>Sigmodontinae</taxon>
        <taxon>Chilomys</taxon>
    </lineage>
</organism>
<evidence type="ECO:0000250" key="1"/>
<evidence type="ECO:0000250" key="2">
    <source>
        <dbReference type="UniProtKB" id="P00157"/>
    </source>
</evidence>
<evidence type="ECO:0000255" key="3">
    <source>
        <dbReference type="PROSITE-ProRule" id="PRU00967"/>
    </source>
</evidence>
<evidence type="ECO:0000255" key="4">
    <source>
        <dbReference type="PROSITE-ProRule" id="PRU00968"/>
    </source>
</evidence>
<comment type="function">
    <text evidence="2">Component of the ubiquinol-cytochrome c reductase complex (complex III or cytochrome b-c1 complex) that is part of the mitochondrial respiratory chain. The b-c1 complex mediates electron transfer from ubiquinol to cytochrome c. Contributes to the generation of a proton gradient across the mitochondrial membrane that is then used for ATP synthesis.</text>
</comment>
<comment type="cofactor">
    <cofactor evidence="2">
        <name>heme b</name>
        <dbReference type="ChEBI" id="CHEBI:60344"/>
    </cofactor>
    <text evidence="2">Binds 2 heme b groups non-covalently.</text>
</comment>
<comment type="subunit">
    <text evidence="2">The cytochrome bc1 complex contains 11 subunits: 3 respiratory subunits (MT-CYB, CYC1 and UQCRFS1), 2 core proteins (UQCRC1 and UQCRC2) and 6 low-molecular weight proteins (UQCRH/QCR6, UQCRB/QCR7, UQCRQ/QCR8, UQCR10/QCR9, UQCR11/QCR10 and a cleavage product of UQCRFS1). This cytochrome bc1 complex then forms a dimer.</text>
</comment>
<comment type="subcellular location">
    <subcellularLocation>
        <location evidence="2">Mitochondrion inner membrane</location>
        <topology evidence="2">Multi-pass membrane protein</topology>
    </subcellularLocation>
</comment>
<comment type="miscellaneous">
    <text evidence="1">Heme 1 (or BL or b562) is low-potential and absorbs at about 562 nm, and heme 2 (or BH or b566) is high-potential and absorbs at about 566 nm.</text>
</comment>
<comment type="similarity">
    <text evidence="3 4">Belongs to the cytochrome b family.</text>
</comment>
<comment type="caution">
    <text evidence="2">The full-length protein contains only eight transmembrane helices, not nine as predicted by bioinformatics tools.</text>
</comment>
<reference key="1">
    <citation type="journal article" date="1999" name="J. Mammal. Evol.">
        <title>Phylogenetic relationships and the radiation of Sigmodontine rodents in South America: evidence from cytochrome b.</title>
        <authorList>
            <person name="Smith M.F."/>
            <person name="Patton J.L."/>
        </authorList>
    </citation>
    <scope>NUCLEOTIDE SEQUENCE [GENOMIC DNA]</scope>
</reference>
<geneLocation type="mitochondrion"/>